<comment type="function">
    <text evidence="1">Heme chaperone required for the biogenesis of c-type cytochromes. Transiently binds heme delivered by CcmC and transfers the heme to apo-cytochromes in a process facilitated by CcmF and CcmH.</text>
</comment>
<comment type="subcellular location">
    <subcellularLocation>
        <location evidence="1">Cell inner membrane</location>
        <topology evidence="1">Single-pass type II membrane protein</topology>
        <orientation evidence="1">Periplasmic side</orientation>
    </subcellularLocation>
</comment>
<comment type="similarity">
    <text evidence="1">Belongs to the CcmE/CycJ family.</text>
</comment>
<evidence type="ECO:0000255" key="1">
    <source>
        <dbReference type="HAMAP-Rule" id="MF_01959"/>
    </source>
</evidence>
<organism>
    <name type="scientific">Azotobacter vinelandii (strain DJ / ATCC BAA-1303)</name>
    <dbReference type="NCBI Taxonomy" id="322710"/>
    <lineage>
        <taxon>Bacteria</taxon>
        <taxon>Pseudomonadati</taxon>
        <taxon>Pseudomonadota</taxon>
        <taxon>Gammaproteobacteria</taxon>
        <taxon>Pseudomonadales</taxon>
        <taxon>Pseudomonadaceae</taxon>
        <taxon>Azotobacter</taxon>
    </lineage>
</organism>
<dbReference type="EMBL" id="CP001157">
    <property type="protein sequence ID" value="ACO79206.1"/>
    <property type="molecule type" value="Genomic_DNA"/>
</dbReference>
<dbReference type="RefSeq" id="WP_012701592.1">
    <property type="nucleotide sequence ID" value="NC_012560.1"/>
</dbReference>
<dbReference type="SMR" id="C1DN39"/>
<dbReference type="STRING" id="322710.Avin_30410"/>
<dbReference type="EnsemblBacteria" id="ACO79206">
    <property type="protein sequence ID" value="ACO79206"/>
    <property type="gene ID" value="Avin_30410"/>
</dbReference>
<dbReference type="GeneID" id="88186130"/>
<dbReference type="KEGG" id="avn:Avin_30410"/>
<dbReference type="eggNOG" id="COG2332">
    <property type="taxonomic scope" value="Bacteria"/>
</dbReference>
<dbReference type="HOGENOM" id="CLU_079503_1_1_6"/>
<dbReference type="OrthoDB" id="9793584at2"/>
<dbReference type="Proteomes" id="UP000002424">
    <property type="component" value="Chromosome"/>
</dbReference>
<dbReference type="GO" id="GO:0005886">
    <property type="term" value="C:plasma membrane"/>
    <property type="evidence" value="ECO:0007669"/>
    <property type="project" value="UniProtKB-SubCell"/>
</dbReference>
<dbReference type="GO" id="GO:0020037">
    <property type="term" value="F:heme binding"/>
    <property type="evidence" value="ECO:0007669"/>
    <property type="project" value="InterPro"/>
</dbReference>
<dbReference type="GO" id="GO:0046872">
    <property type="term" value="F:metal ion binding"/>
    <property type="evidence" value="ECO:0007669"/>
    <property type="project" value="UniProtKB-KW"/>
</dbReference>
<dbReference type="GO" id="GO:0017004">
    <property type="term" value="P:cytochrome complex assembly"/>
    <property type="evidence" value="ECO:0007669"/>
    <property type="project" value="UniProtKB-KW"/>
</dbReference>
<dbReference type="FunFam" id="2.40.50.140:FF:000104">
    <property type="entry name" value="Cytochrome c-type biogenesis protein CcmE"/>
    <property type="match status" value="1"/>
</dbReference>
<dbReference type="Gene3D" id="2.40.50.140">
    <property type="entry name" value="Nucleic acid-binding proteins"/>
    <property type="match status" value="1"/>
</dbReference>
<dbReference type="HAMAP" id="MF_01959">
    <property type="entry name" value="CcmE"/>
    <property type="match status" value="1"/>
</dbReference>
<dbReference type="InterPro" id="IPR004329">
    <property type="entry name" value="CcmE"/>
</dbReference>
<dbReference type="InterPro" id="IPR036127">
    <property type="entry name" value="CcmE-like_sf"/>
</dbReference>
<dbReference type="InterPro" id="IPR012340">
    <property type="entry name" value="NA-bd_OB-fold"/>
</dbReference>
<dbReference type="NCBIfam" id="NF009727">
    <property type="entry name" value="PRK13254.1-1"/>
    <property type="match status" value="1"/>
</dbReference>
<dbReference type="NCBIfam" id="NF009729">
    <property type="entry name" value="PRK13254.1-3"/>
    <property type="match status" value="1"/>
</dbReference>
<dbReference type="NCBIfam" id="NF009731">
    <property type="entry name" value="PRK13254.1-5"/>
    <property type="match status" value="1"/>
</dbReference>
<dbReference type="PANTHER" id="PTHR34128">
    <property type="entry name" value="CYTOCHROME C-TYPE BIOGENESIS PROTEIN CCME HOMOLOG, MITOCHONDRIAL"/>
    <property type="match status" value="1"/>
</dbReference>
<dbReference type="PANTHER" id="PTHR34128:SF2">
    <property type="entry name" value="CYTOCHROME C-TYPE BIOGENESIS PROTEIN CCME HOMOLOG, MITOCHONDRIAL"/>
    <property type="match status" value="1"/>
</dbReference>
<dbReference type="Pfam" id="PF03100">
    <property type="entry name" value="CcmE"/>
    <property type="match status" value="1"/>
</dbReference>
<dbReference type="SUPFAM" id="SSF82093">
    <property type="entry name" value="Heme chaperone CcmE"/>
    <property type="match status" value="1"/>
</dbReference>
<proteinExistence type="inferred from homology"/>
<sequence length="155" mass="16370">MNPVRKRRLFIVLAILAGVGAAVALALSALQQNINLFYTPSQIAAGEAPEGARIRAGGLVEKGSLQRDATSLAATFRVTDGVATVTVRYQGILPDLFREGQGIVALGRVDAGGMLQADEVLAKHDENYMPPEVSQALEKSGMLKHYENGKPGGAQ</sequence>
<accession>C1DN39</accession>
<protein>
    <recommendedName>
        <fullName evidence="1">Cytochrome c-type biogenesis protein CcmE</fullName>
    </recommendedName>
    <alternativeName>
        <fullName evidence="1">Cytochrome c maturation protein E</fullName>
    </alternativeName>
    <alternativeName>
        <fullName evidence="1">Heme chaperone CcmE</fullName>
    </alternativeName>
</protein>
<feature type="chain" id="PRO_1000216211" description="Cytochrome c-type biogenesis protein CcmE">
    <location>
        <begin position="1"/>
        <end position="155"/>
    </location>
</feature>
<feature type="topological domain" description="Cytoplasmic" evidence="1">
    <location>
        <begin position="1"/>
        <end position="8"/>
    </location>
</feature>
<feature type="transmembrane region" description="Helical; Signal-anchor for type II membrane protein" evidence="1">
    <location>
        <begin position="9"/>
        <end position="29"/>
    </location>
</feature>
<feature type="topological domain" description="Periplasmic" evidence="1">
    <location>
        <begin position="30"/>
        <end position="155"/>
    </location>
</feature>
<feature type="binding site" description="covalent" evidence="1">
    <location>
        <position position="124"/>
    </location>
    <ligand>
        <name>heme</name>
        <dbReference type="ChEBI" id="CHEBI:30413"/>
    </ligand>
</feature>
<feature type="binding site" description="axial binding residue" evidence="1">
    <location>
        <position position="128"/>
    </location>
    <ligand>
        <name>heme</name>
        <dbReference type="ChEBI" id="CHEBI:30413"/>
    </ligand>
    <ligandPart>
        <name>Fe</name>
        <dbReference type="ChEBI" id="CHEBI:18248"/>
    </ligandPart>
</feature>
<reference key="1">
    <citation type="journal article" date="2009" name="J. Bacteriol.">
        <title>Genome sequence of Azotobacter vinelandii, an obligate aerobe specialized to support diverse anaerobic metabolic processes.</title>
        <authorList>
            <person name="Setubal J.C."/>
            <person name="Dos Santos P."/>
            <person name="Goldman B.S."/>
            <person name="Ertesvaag H."/>
            <person name="Espin G."/>
            <person name="Rubio L.M."/>
            <person name="Valla S."/>
            <person name="Almeida N.F."/>
            <person name="Balasubramanian D."/>
            <person name="Cromes L."/>
            <person name="Curatti L."/>
            <person name="Du Z."/>
            <person name="Godsy E."/>
            <person name="Goodner B."/>
            <person name="Hellner-Burris K."/>
            <person name="Hernandez J.A."/>
            <person name="Houmiel K."/>
            <person name="Imperial J."/>
            <person name="Kennedy C."/>
            <person name="Larson T.J."/>
            <person name="Latreille P."/>
            <person name="Ligon L.S."/>
            <person name="Lu J."/>
            <person name="Maerk M."/>
            <person name="Miller N.M."/>
            <person name="Norton S."/>
            <person name="O'Carroll I.P."/>
            <person name="Paulsen I."/>
            <person name="Raulfs E.C."/>
            <person name="Roemer R."/>
            <person name="Rosser J."/>
            <person name="Segura D."/>
            <person name="Slater S."/>
            <person name="Stricklin S.L."/>
            <person name="Studholme D.J."/>
            <person name="Sun J."/>
            <person name="Viana C.J."/>
            <person name="Wallin E."/>
            <person name="Wang B."/>
            <person name="Wheeler C."/>
            <person name="Zhu H."/>
            <person name="Dean D.R."/>
            <person name="Dixon R."/>
            <person name="Wood D."/>
        </authorList>
    </citation>
    <scope>NUCLEOTIDE SEQUENCE [LARGE SCALE GENOMIC DNA]</scope>
    <source>
        <strain>DJ / ATCC BAA-1303</strain>
    </source>
</reference>
<keyword id="KW-0997">Cell inner membrane</keyword>
<keyword id="KW-1003">Cell membrane</keyword>
<keyword id="KW-0201">Cytochrome c-type biogenesis</keyword>
<keyword id="KW-0349">Heme</keyword>
<keyword id="KW-0408">Iron</keyword>
<keyword id="KW-0472">Membrane</keyword>
<keyword id="KW-0479">Metal-binding</keyword>
<keyword id="KW-0735">Signal-anchor</keyword>
<keyword id="KW-0812">Transmembrane</keyword>
<keyword id="KW-1133">Transmembrane helix</keyword>
<name>CCME_AZOVD</name>
<gene>
    <name evidence="1" type="primary">ccmE</name>
    <name evidence="1" type="synonym">cycJ</name>
    <name type="ordered locus">Avin_30410</name>
</gene>